<organism>
    <name type="scientific">Alcanivorax borkumensis (strain ATCC 700651 / DSM 11573 / NCIMB 13689 / SK2)</name>
    <dbReference type="NCBI Taxonomy" id="393595"/>
    <lineage>
        <taxon>Bacteria</taxon>
        <taxon>Pseudomonadati</taxon>
        <taxon>Pseudomonadota</taxon>
        <taxon>Gammaproteobacteria</taxon>
        <taxon>Oceanospirillales</taxon>
        <taxon>Alcanivoracaceae</taxon>
        <taxon>Alcanivorax</taxon>
    </lineage>
</organism>
<accession>Q0VT94</accession>
<dbReference type="EC" id="2.7.4.8" evidence="1"/>
<dbReference type="EMBL" id="AM286690">
    <property type="protein sequence ID" value="CAL15626.1"/>
    <property type="molecule type" value="Genomic_DNA"/>
</dbReference>
<dbReference type="RefSeq" id="WP_011587475.1">
    <property type="nucleotide sequence ID" value="NC_008260.1"/>
</dbReference>
<dbReference type="SMR" id="Q0VT94"/>
<dbReference type="STRING" id="393595.ABO_0178"/>
<dbReference type="KEGG" id="abo:ABO_0178"/>
<dbReference type="eggNOG" id="COG0194">
    <property type="taxonomic scope" value="Bacteria"/>
</dbReference>
<dbReference type="HOGENOM" id="CLU_001715_1_0_6"/>
<dbReference type="OrthoDB" id="9808150at2"/>
<dbReference type="Proteomes" id="UP000008871">
    <property type="component" value="Chromosome"/>
</dbReference>
<dbReference type="GO" id="GO:0005829">
    <property type="term" value="C:cytosol"/>
    <property type="evidence" value="ECO:0007669"/>
    <property type="project" value="TreeGrafter"/>
</dbReference>
<dbReference type="GO" id="GO:0005524">
    <property type="term" value="F:ATP binding"/>
    <property type="evidence" value="ECO:0007669"/>
    <property type="project" value="UniProtKB-UniRule"/>
</dbReference>
<dbReference type="GO" id="GO:0004385">
    <property type="term" value="F:guanylate kinase activity"/>
    <property type="evidence" value="ECO:0007669"/>
    <property type="project" value="UniProtKB-UniRule"/>
</dbReference>
<dbReference type="CDD" id="cd00071">
    <property type="entry name" value="GMPK"/>
    <property type="match status" value="1"/>
</dbReference>
<dbReference type="FunFam" id="3.40.50.300:FF:000084">
    <property type="entry name" value="Guanylate kinase"/>
    <property type="match status" value="1"/>
</dbReference>
<dbReference type="FunFam" id="3.30.63.10:FF:000002">
    <property type="entry name" value="Guanylate kinase 1"/>
    <property type="match status" value="1"/>
</dbReference>
<dbReference type="Gene3D" id="3.30.63.10">
    <property type="entry name" value="Guanylate Kinase phosphate binding domain"/>
    <property type="match status" value="1"/>
</dbReference>
<dbReference type="Gene3D" id="3.40.50.300">
    <property type="entry name" value="P-loop containing nucleotide triphosphate hydrolases"/>
    <property type="match status" value="1"/>
</dbReference>
<dbReference type="HAMAP" id="MF_00328">
    <property type="entry name" value="Guanylate_kinase"/>
    <property type="match status" value="1"/>
</dbReference>
<dbReference type="InterPro" id="IPR008145">
    <property type="entry name" value="GK/Ca_channel_bsu"/>
</dbReference>
<dbReference type="InterPro" id="IPR008144">
    <property type="entry name" value="Guanylate_kin-like_dom"/>
</dbReference>
<dbReference type="InterPro" id="IPR017665">
    <property type="entry name" value="Guanylate_kinase"/>
</dbReference>
<dbReference type="InterPro" id="IPR020590">
    <property type="entry name" value="Guanylate_kinase_CS"/>
</dbReference>
<dbReference type="InterPro" id="IPR027417">
    <property type="entry name" value="P-loop_NTPase"/>
</dbReference>
<dbReference type="NCBIfam" id="TIGR03263">
    <property type="entry name" value="guanyl_kin"/>
    <property type="match status" value="1"/>
</dbReference>
<dbReference type="PANTHER" id="PTHR23117:SF13">
    <property type="entry name" value="GUANYLATE KINASE"/>
    <property type="match status" value="1"/>
</dbReference>
<dbReference type="PANTHER" id="PTHR23117">
    <property type="entry name" value="GUANYLATE KINASE-RELATED"/>
    <property type="match status" value="1"/>
</dbReference>
<dbReference type="Pfam" id="PF00625">
    <property type="entry name" value="Guanylate_kin"/>
    <property type="match status" value="1"/>
</dbReference>
<dbReference type="SMART" id="SM00072">
    <property type="entry name" value="GuKc"/>
    <property type="match status" value="1"/>
</dbReference>
<dbReference type="SUPFAM" id="SSF52540">
    <property type="entry name" value="P-loop containing nucleoside triphosphate hydrolases"/>
    <property type="match status" value="1"/>
</dbReference>
<dbReference type="PROSITE" id="PS00856">
    <property type="entry name" value="GUANYLATE_KINASE_1"/>
    <property type="match status" value="1"/>
</dbReference>
<dbReference type="PROSITE" id="PS50052">
    <property type="entry name" value="GUANYLATE_KINASE_2"/>
    <property type="match status" value="1"/>
</dbReference>
<proteinExistence type="inferred from homology"/>
<keyword id="KW-0067">ATP-binding</keyword>
<keyword id="KW-0963">Cytoplasm</keyword>
<keyword id="KW-0418">Kinase</keyword>
<keyword id="KW-0547">Nucleotide-binding</keyword>
<keyword id="KW-1185">Reference proteome</keyword>
<keyword id="KW-0808">Transferase</keyword>
<gene>
    <name evidence="1" type="primary">gmk</name>
    <name type="ordered locus">ABO_0178</name>
</gene>
<feature type="chain" id="PRO_0000266281" description="Guanylate kinase">
    <location>
        <begin position="1"/>
        <end position="207"/>
    </location>
</feature>
<feature type="domain" description="Guanylate kinase-like" evidence="1">
    <location>
        <begin position="5"/>
        <end position="183"/>
    </location>
</feature>
<feature type="binding site" evidence="1">
    <location>
        <begin position="12"/>
        <end position="19"/>
    </location>
    <ligand>
        <name>ATP</name>
        <dbReference type="ChEBI" id="CHEBI:30616"/>
    </ligand>
</feature>
<protein>
    <recommendedName>
        <fullName evidence="1">Guanylate kinase</fullName>
        <ecNumber evidence="1">2.7.4.8</ecNumber>
    </recommendedName>
    <alternativeName>
        <fullName evidence="1">GMP kinase</fullName>
    </alternativeName>
</protein>
<sequence>MADKGTLYIISAPSGAGKTSLVAALVDKLAQVRISISHTTRAMRPGEKDGVNYHFTDRDCFVRQVEQGRFLEHAQVFGNLYGTSADWVAQTLRTGDDVILEIDWQGATQIRKQLPDSVSIFILPPSLEALAGRLRGRETDDETVIQQRLDGAQEEMSHYGEFDYLVVNDDFQRALYELEAIVEARRLVTARQVARQAATLQNLLARR</sequence>
<reference key="1">
    <citation type="journal article" date="2006" name="Nat. Biotechnol.">
        <title>Genome sequence of the ubiquitous hydrocarbon-degrading marine bacterium Alcanivorax borkumensis.</title>
        <authorList>
            <person name="Schneiker S."/>
            <person name="Martins dos Santos V.A.P."/>
            <person name="Bartels D."/>
            <person name="Bekel T."/>
            <person name="Brecht M."/>
            <person name="Buhrmester J."/>
            <person name="Chernikova T.N."/>
            <person name="Denaro R."/>
            <person name="Ferrer M."/>
            <person name="Gertler C."/>
            <person name="Goesmann A."/>
            <person name="Golyshina O.V."/>
            <person name="Kaminski F."/>
            <person name="Khachane A.N."/>
            <person name="Lang S."/>
            <person name="Linke B."/>
            <person name="McHardy A.C."/>
            <person name="Meyer F."/>
            <person name="Nechitaylo T."/>
            <person name="Puehler A."/>
            <person name="Regenhardt D."/>
            <person name="Rupp O."/>
            <person name="Sabirova J.S."/>
            <person name="Selbitschka W."/>
            <person name="Yakimov M.M."/>
            <person name="Timmis K.N."/>
            <person name="Vorhoelter F.-J."/>
            <person name="Weidner S."/>
            <person name="Kaiser O."/>
            <person name="Golyshin P.N."/>
        </authorList>
    </citation>
    <scope>NUCLEOTIDE SEQUENCE [LARGE SCALE GENOMIC DNA]</scope>
    <source>
        <strain>ATCC 700651 / DSM 11573 / NCIMB 13689 / SK2</strain>
    </source>
</reference>
<name>KGUA_ALCBS</name>
<comment type="function">
    <text evidence="1">Essential for recycling GMP and indirectly, cGMP.</text>
</comment>
<comment type="catalytic activity">
    <reaction evidence="1">
        <text>GMP + ATP = GDP + ADP</text>
        <dbReference type="Rhea" id="RHEA:20780"/>
        <dbReference type="ChEBI" id="CHEBI:30616"/>
        <dbReference type="ChEBI" id="CHEBI:58115"/>
        <dbReference type="ChEBI" id="CHEBI:58189"/>
        <dbReference type="ChEBI" id="CHEBI:456216"/>
        <dbReference type="EC" id="2.7.4.8"/>
    </reaction>
</comment>
<comment type="subcellular location">
    <subcellularLocation>
        <location evidence="1">Cytoplasm</location>
    </subcellularLocation>
</comment>
<comment type="similarity">
    <text evidence="1">Belongs to the guanylate kinase family.</text>
</comment>
<evidence type="ECO:0000255" key="1">
    <source>
        <dbReference type="HAMAP-Rule" id="MF_00328"/>
    </source>
</evidence>